<reference key="1">
    <citation type="journal article" date="2004" name="Proc. Natl. Acad. Sci. U.S.A.">
        <title>Insights into the evolution of Yersinia pestis through whole-genome comparison with Yersinia pseudotuberculosis.</title>
        <authorList>
            <person name="Chain P.S.G."/>
            <person name="Carniel E."/>
            <person name="Larimer F.W."/>
            <person name="Lamerdin J."/>
            <person name="Stoutland P.O."/>
            <person name="Regala W.M."/>
            <person name="Georgescu A.M."/>
            <person name="Vergez L.M."/>
            <person name="Land M.L."/>
            <person name="Motin V.L."/>
            <person name="Brubaker R.R."/>
            <person name="Fowler J."/>
            <person name="Hinnebusch J."/>
            <person name="Marceau M."/>
            <person name="Medigue C."/>
            <person name="Simonet M."/>
            <person name="Chenal-Francisque V."/>
            <person name="Souza B."/>
            <person name="Dacheux D."/>
            <person name="Elliott J.M."/>
            <person name="Derbise A."/>
            <person name="Hauser L.J."/>
            <person name="Garcia E."/>
        </authorList>
    </citation>
    <scope>NUCLEOTIDE SEQUENCE [LARGE SCALE GENOMIC DNA]</scope>
    <source>
        <strain>IP32953</strain>
    </source>
</reference>
<sequence length="272" mass="29483">MTDMYSLFVAFILGVVEGLTEFLPVSSTGHMIIVGELLGFTGDKAKTFEVIIQLGSILAVVVVFWRRLFGLIGIHFGAVPHEGKTNGHLTLGHILLAMIPAVILGLAFHDVIKALFDPKSVMYALVAGGVLLLAAEWLKPKNPKAVGLDDITYRQAFAIGCFQCLALWPGFSRSGATISGGMLVGVNRYAASEFSFILAVPMMIGASGLDLYKSLHFLTLGDLPMFAVGFITAFIVALIAIKTFLSLIKRISFVPFAIYRFIVAAVVYWVFM</sequence>
<evidence type="ECO:0000255" key="1">
    <source>
        <dbReference type="HAMAP-Rule" id="MF_01006"/>
    </source>
</evidence>
<comment type="function">
    <text evidence="1">Catalyzes the dephosphorylation of undecaprenyl diphosphate (UPP). Confers resistance to bacitracin.</text>
</comment>
<comment type="catalytic activity">
    <reaction evidence="1">
        <text>di-trans,octa-cis-undecaprenyl diphosphate + H2O = di-trans,octa-cis-undecaprenyl phosphate + phosphate + H(+)</text>
        <dbReference type="Rhea" id="RHEA:28094"/>
        <dbReference type="ChEBI" id="CHEBI:15377"/>
        <dbReference type="ChEBI" id="CHEBI:15378"/>
        <dbReference type="ChEBI" id="CHEBI:43474"/>
        <dbReference type="ChEBI" id="CHEBI:58405"/>
        <dbReference type="ChEBI" id="CHEBI:60392"/>
        <dbReference type="EC" id="3.6.1.27"/>
    </reaction>
</comment>
<comment type="subcellular location">
    <subcellularLocation>
        <location evidence="1">Cell inner membrane</location>
        <topology evidence="1">Multi-pass membrane protein</topology>
    </subcellularLocation>
</comment>
<comment type="miscellaneous">
    <text>Bacitracin is thought to be involved in the inhibition of peptidoglycan synthesis by sequestering undecaprenyl diphosphate, thereby reducing the pool of lipid carrier available.</text>
</comment>
<comment type="similarity">
    <text evidence="1">Belongs to the UppP family.</text>
</comment>
<protein>
    <recommendedName>
        <fullName evidence="1">Undecaprenyl-diphosphatase</fullName>
        <ecNumber evidence="1">3.6.1.27</ecNumber>
    </recommendedName>
    <alternativeName>
        <fullName evidence="1">Bacitracin resistance protein</fullName>
    </alternativeName>
    <alternativeName>
        <fullName evidence="1">Undecaprenyl pyrophosphate phosphatase</fullName>
    </alternativeName>
</protein>
<gene>
    <name evidence="1" type="primary">uppP</name>
    <name type="synonym">bacA</name>
    <name type="synonym">upk</name>
    <name type="ordered locus">YPTB3412</name>
</gene>
<proteinExistence type="inferred from homology"/>
<dbReference type="EC" id="3.6.1.27" evidence="1"/>
<dbReference type="EMBL" id="BX936398">
    <property type="protein sequence ID" value="CAH22650.1"/>
    <property type="molecule type" value="Genomic_DNA"/>
</dbReference>
<dbReference type="RefSeq" id="WP_002212198.1">
    <property type="nucleotide sequence ID" value="NZ_CP009712.1"/>
</dbReference>
<dbReference type="SMR" id="Q665U8"/>
<dbReference type="GeneID" id="57973975"/>
<dbReference type="KEGG" id="ypo:BZ17_3196"/>
<dbReference type="KEGG" id="yps:YPTB3412"/>
<dbReference type="PATRIC" id="fig|273123.14.peg.3347"/>
<dbReference type="Proteomes" id="UP000001011">
    <property type="component" value="Chromosome"/>
</dbReference>
<dbReference type="GO" id="GO:0005886">
    <property type="term" value="C:plasma membrane"/>
    <property type="evidence" value="ECO:0007669"/>
    <property type="project" value="UniProtKB-SubCell"/>
</dbReference>
<dbReference type="GO" id="GO:0050380">
    <property type="term" value="F:undecaprenyl-diphosphatase activity"/>
    <property type="evidence" value="ECO:0007669"/>
    <property type="project" value="UniProtKB-UniRule"/>
</dbReference>
<dbReference type="GO" id="GO:0071555">
    <property type="term" value="P:cell wall organization"/>
    <property type="evidence" value="ECO:0007669"/>
    <property type="project" value="UniProtKB-KW"/>
</dbReference>
<dbReference type="GO" id="GO:0009252">
    <property type="term" value="P:peptidoglycan biosynthetic process"/>
    <property type="evidence" value="ECO:0007669"/>
    <property type="project" value="UniProtKB-KW"/>
</dbReference>
<dbReference type="GO" id="GO:0008360">
    <property type="term" value="P:regulation of cell shape"/>
    <property type="evidence" value="ECO:0007669"/>
    <property type="project" value="UniProtKB-KW"/>
</dbReference>
<dbReference type="GO" id="GO:0046677">
    <property type="term" value="P:response to antibiotic"/>
    <property type="evidence" value="ECO:0007669"/>
    <property type="project" value="UniProtKB-UniRule"/>
</dbReference>
<dbReference type="HAMAP" id="MF_01006">
    <property type="entry name" value="Undec_diphosphatase"/>
    <property type="match status" value="1"/>
</dbReference>
<dbReference type="InterPro" id="IPR003824">
    <property type="entry name" value="UppP"/>
</dbReference>
<dbReference type="NCBIfam" id="NF001388">
    <property type="entry name" value="PRK00281.1-1"/>
    <property type="match status" value="1"/>
</dbReference>
<dbReference type="NCBIfam" id="NF001389">
    <property type="entry name" value="PRK00281.1-2"/>
    <property type="match status" value="1"/>
</dbReference>
<dbReference type="NCBIfam" id="NF001390">
    <property type="entry name" value="PRK00281.1-4"/>
    <property type="match status" value="1"/>
</dbReference>
<dbReference type="NCBIfam" id="TIGR00753">
    <property type="entry name" value="undec_PP_bacA"/>
    <property type="match status" value="1"/>
</dbReference>
<dbReference type="PANTHER" id="PTHR30622">
    <property type="entry name" value="UNDECAPRENYL-DIPHOSPHATASE"/>
    <property type="match status" value="1"/>
</dbReference>
<dbReference type="PANTHER" id="PTHR30622:SF3">
    <property type="entry name" value="UNDECAPRENYL-DIPHOSPHATASE"/>
    <property type="match status" value="1"/>
</dbReference>
<dbReference type="Pfam" id="PF02673">
    <property type="entry name" value="BacA"/>
    <property type="match status" value="1"/>
</dbReference>
<accession>Q665U8</accession>
<keyword id="KW-0046">Antibiotic resistance</keyword>
<keyword id="KW-0997">Cell inner membrane</keyword>
<keyword id="KW-1003">Cell membrane</keyword>
<keyword id="KW-0133">Cell shape</keyword>
<keyword id="KW-0961">Cell wall biogenesis/degradation</keyword>
<keyword id="KW-0378">Hydrolase</keyword>
<keyword id="KW-0472">Membrane</keyword>
<keyword id="KW-0573">Peptidoglycan synthesis</keyword>
<keyword id="KW-0812">Transmembrane</keyword>
<keyword id="KW-1133">Transmembrane helix</keyword>
<organism>
    <name type="scientific">Yersinia pseudotuberculosis serotype I (strain IP32953)</name>
    <dbReference type="NCBI Taxonomy" id="273123"/>
    <lineage>
        <taxon>Bacteria</taxon>
        <taxon>Pseudomonadati</taxon>
        <taxon>Pseudomonadota</taxon>
        <taxon>Gammaproteobacteria</taxon>
        <taxon>Enterobacterales</taxon>
        <taxon>Yersiniaceae</taxon>
        <taxon>Yersinia</taxon>
    </lineage>
</organism>
<name>UPPP_YERPS</name>
<feature type="chain" id="PRO_0000151247" description="Undecaprenyl-diphosphatase">
    <location>
        <begin position="1"/>
        <end position="272"/>
    </location>
</feature>
<feature type="transmembrane region" description="Helical" evidence="1">
    <location>
        <begin position="5"/>
        <end position="25"/>
    </location>
</feature>
<feature type="transmembrane region" description="Helical" evidence="1">
    <location>
        <begin position="45"/>
        <end position="65"/>
    </location>
</feature>
<feature type="transmembrane region" description="Helical" evidence="1">
    <location>
        <begin position="88"/>
        <end position="108"/>
    </location>
</feature>
<feature type="transmembrane region" description="Helical" evidence="1">
    <location>
        <begin position="114"/>
        <end position="134"/>
    </location>
</feature>
<feature type="transmembrane region" description="Helical" evidence="1">
    <location>
        <begin position="153"/>
        <end position="172"/>
    </location>
</feature>
<feature type="transmembrane region" description="Helical" evidence="1">
    <location>
        <begin position="189"/>
        <end position="209"/>
    </location>
</feature>
<feature type="transmembrane region" description="Helical" evidence="1">
    <location>
        <begin position="221"/>
        <end position="241"/>
    </location>
</feature>
<feature type="transmembrane region" description="Helical" evidence="1">
    <location>
        <begin position="251"/>
        <end position="271"/>
    </location>
</feature>